<accession>O58783</accession>
<evidence type="ECO:0000250" key="1">
    <source>
        <dbReference type="UniProtKB" id="Q6NDF6"/>
    </source>
</evidence>
<evidence type="ECO:0000255" key="2">
    <source>
        <dbReference type="PROSITE-ProRule" id="PRU01003"/>
    </source>
</evidence>
<evidence type="ECO:0000305" key="3"/>
<organism>
    <name type="scientific">Pyrococcus horikoshii (strain ATCC 700860 / DSM 12428 / JCM 9974 / NBRC 100139 / OT-3)</name>
    <dbReference type="NCBI Taxonomy" id="70601"/>
    <lineage>
        <taxon>Archaea</taxon>
        <taxon>Methanobacteriati</taxon>
        <taxon>Methanobacteriota</taxon>
        <taxon>Thermococci</taxon>
        <taxon>Thermococcales</taxon>
        <taxon>Thermococcaceae</taxon>
        <taxon>Pyrococcus</taxon>
    </lineage>
</organism>
<comment type="similarity">
    <text evidence="3">Belongs to the tRNA methyltransferase O family.</text>
</comment>
<keyword id="KW-0949">S-adenosyl-L-methionine</keyword>
<dbReference type="EMBL" id="BA000001">
    <property type="protein sequence ID" value="BAA30154.1"/>
    <property type="molecule type" value="Genomic_DNA"/>
</dbReference>
<dbReference type="PIR" id="D71099">
    <property type="entry name" value="D71099"/>
</dbReference>
<dbReference type="RefSeq" id="WP_010885143.1">
    <property type="nucleotide sequence ID" value="NC_000961.1"/>
</dbReference>
<dbReference type="SMR" id="O58783"/>
<dbReference type="STRING" id="70601.gene:9378014"/>
<dbReference type="EnsemblBacteria" id="BAA30154">
    <property type="protein sequence ID" value="BAA30154"/>
    <property type="gene ID" value="BAA30154"/>
</dbReference>
<dbReference type="GeneID" id="1443378"/>
<dbReference type="KEGG" id="pho:PH1056"/>
<dbReference type="eggNOG" id="arCOG00761">
    <property type="taxonomic scope" value="Archaea"/>
</dbReference>
<dbReference type="OrthoDB" id="40408at2157"/>
<dbReference type="Proteomes" id="UP000000752">
    <property type="component" value="Chromosome"/>
</dbReference>
<dbReference type="CDD" id="cd09281">
    <property type="entry name" value="UPF0066"/>
    <property type="match status" value="1"/>
</dbReference>
<dbReference type="Gene3D" id="2.40.30.70">
    <property type="entry name" value="YaeB-like"/>
    <property type="match status" value="1"/>
</dbReference>
<dbReference type="InterPro" id="IPR023370">
    <property type="entry name" value="TrmO-like_N"/>
</dbReference>
<dbReference type="InterPro" id="IPR023368">
    <property type="entry name" value="UPF0066_cons_site"/>
</dbReference>
<dbReference type="InterPro" id="IPR040372">
    <property type="entry name" value="YaeB-like"/>
</dbReference>
<dbReference type="InterPro" id="IPR036413">
    <property type="entry name" value="YaeB-like_sf"/>
</dbReference>
<dbReference type="InterPro" id="IPR036414">
    <property type="entry name" value="YaeB_N_sf"/>
</dbReference>
<dbReference type="NCBIfam" id="TIGR00104">
    <property type="entry name" value="tRNA_TsaA"/>
    <property type="match status" value="1"/>
</dbReference>
<dbReference type="PANTHER" id="PTHR12818">
    <property type="entry name" value="TRNA (ADENINE(37)-N6)-METHYLTRANSFERASE"/>
    <property type="match status" value="1"/>
</dbReference>
<dbReference type="PANTHER" id="PTHR12818:SF0">
    <property type="entry name" value="TRNA (ADENINE(37)-N6)-METHYLTRANSFERASE"/>
    <property type="match status" value="1"/>
</dbReference>
<dbReference type="Pfam" id="PF01980">
    <property type="entry name" value="TrmO_N"/>
    <property type="match status" value="1"/>
</dbReference>
<dbReference type="SUPFAM" id="SSF118196">
    <property type="entry name" value="YaeB-like"/>
    <property type="match status" value="1"/>
</dbReference>
<dbReference type="PROSITE" id="PS01318">
    <property type="entry name" value="TSAA_1"/>
    <property type="match status" value="1"/>
</dbReference>
<dbReference type="PROSITE" id="PS51668">
    <property type="entry name" value="TSAA_2"/>
    <property type="match status" value="1"/>
</dbReference>
<name>Y1056_PYRHO</name>
<reference key="1">
    <citation type="journal article" date="1998" name="DNA Res.">
        <title>Complete sequence and gene organization of the genome of a hyper-thermophilic archaebacterium, Pyrococcus horikoshii OT3.</title>
        <authorList>
            <person name="Kawarabayasi Y."/>
            <person name="Sawada M."/>
            <person name="Horikawa H."/>
            <person name="Haikawa Y."/>
            <person name="Hino Y."/>
            <person name="Yamamoto S."/>
            <person name="Sekine M."/>
            <person name="Baba S."/>
            <person name="Kosugi H."/>
            <person name="Hosoyama A."/>
            <person name="Nagai Y."/>
            <person name="Sakai M."/>
            <person name="Ogura K."/>
            <person name="Otsuka R."/>
            <person name="Nakazawa H."/>
            <person name="Takamiya M."/>
            <person name="Ohfuku Y."/>
            <person name="Funahashi T."/>
            <person name="Tanaka T."/>
            <person name="Kudoh Y."/>
            <person name="Yamazaki J."/>
            <person name="Kushida N."/>
            <person name="Oguchi A."/>
            <person name="Aoki K."/>
            <person name="Yoshizawa T."/>
            <person name="Nakamura Y."/>
            <person name="Robb F.T."/>
            <person name="Horikoshi K."/>
            <person name="Masuchi Y."/>
            <person name="Shizuya H."/>
            <person name="Kikuchi H."/>
        </authorList>
    </citation>
    <scope>NUCLEOTIDE SEQUENCE [LARGE SCALE GENOMIC DNA]</scope>
    <source>
        <strain>ATCC 700860 / DSM 12428 / JCM 9974 / NBRC 100139 / OT-3</strain>
    </source>
</reference>
<gene>
    <name type="ordered locus">PH1056</name>
    <name type="ORF">PHAI004</name>
</gene>
<feature type="chain" id="PRO_0000155626" description="Probable S-adenosyl-L-methionine-binding protein PH1056">
    <location>
        <begin position="1"/>
        <end position="136"/>
    </location>
</feature>
<feature type="domain" description="TsaA-like" evidence="2">
    <location>
        <begin position="8"/>
        <end position="126"/>
    </location>
</feature>
<feature type="binding site" evidence="1">
    <location>
        <begin position="48"/>
        <end position="49"/>
    </location>
    <ligand>
        <name>S-adenosyl-L-methionine</name>
        <dbReference type="ChEBI" id="CHEBI:59789"/>
    </ligand>
</feature>
<feature type="binding site" evidence="1">
    <location>
        <position position="78"/>
    </location>
    <ligand>
        <name>S-adenosyl-L-methionine</name>
        <dbReference type="ChEBI" id="CHEBI:59789"/>
    </ligand>
</feature>
<feature type="binding site" evidence="1">
    <location>
        <begin position="106"/>
        <end position="109"/>
    </location>
    <ligand>
        <name>S-adenosyl-L-methionine</name>
        <dbReference type="ChEBI" id="CHEBI:59789"/>
    </ligand>
</feature>
<sequence>MKFEAFKIVPVGYIRKEKNVFIEILPEFREGMEGLREGDWIKLILWFHKSDTPELRRILKVHPHGNPENPLTGVFATRSPFRPNPYTVKVHKIEGNRIYIDWIDAEDGTPVSDIKIFPERYDCPKENYQSTSRLKS</sequence>
<proteinExistence type="inferred from homology"/>
<protein>
    <recommendedName>
        <fullName>Probable S-adenosyl-L-methionine-binding protein PH1056</fullName>
    </recommendedName>
</protein>